<evidence type="ECO:0000255" key="1">
    <source>
        <dbReference type="HAMAP-Rule" id="MF_00009"/>
    </source>
</evidence>
<accession>A7ZJ51</accession>
<feature type="chain" id="PRO_1000057068" description="Endoribonuclease YbeY">
    <location>
        <begin position="1"/>
        <end position="155"/>
    </location>
</feature>
<feature type="binding site" evidence="1">
    <location>
        <position position="114"/>
    </location>
    <ligand>
        <name>Zn(2+)</name>
        <dbReference type="ChEBI" id="CHEBI:29105"/>
        <note>catalytic</note>
    </ligand>
</feature>
<feature type="binding site" evidence="1">
    <location>
        <position position="118"/>
    </location>
    <ligand>
        <name>Zn(2+)</name>
        <dbReference type="ChEBI" id="CHEBI:29105"/>
        <note>catalytic</note>
    </ligand>
</feature>
<feature type="binding site" evidence="1">
    <location>
        <position position="124"/>
    </location>
    <ligand>
        <name>Zn(2+)</name>
        <dbReference type="ChEBI" id="CHEBI:29105"/>
        <note>catalytic</note>
    </ligand>
</feature>
<sequence>MSQVILDLQLACEDNSGLPEESQFQTWLNAVIPQFQEESEVTIRVVDTAESHSLNLTYRGKDKPTNVLSFPFEVPPGMEMSLLGDLVICRQVVEKEAQEQGKPLEAHWAHMVVHGSLHLLGYDHIEDDEAEEMEALETEIMLALGYEDPYIAEKE</sequence>
<reference key="1">
    <citation type="journal article" date="2008" name="J. Bacteriol.">
        <title>The pangenome structure of Escherichia coli: comparative genomic analysis of E. coli commensal and pathogenic isolates.</title>
        <authorList>
            <person name="Rasko D.A."/>
            <person name="Rosovitz M.J."/>
            <person name="Myers G.S.A."/>
            <person name="Mongodin E.F."/>
            <person name="Fricke W.F."/>
            <person name="Gajer P."/>
            <person name="Crabtree J."/>
            <person name="Sebaihia M."/>
            <person name="Thomson N.R."/>
            <person name="Chaudhuri R."/>
            <person name="Henderson I.R."/>
            <person name="Sperandio V."/>
            <person name="Ravel J."/>
        </authorList>
    </citation>
    <scope>NUCLEOTIDE SEQUENCE [LARGE SCALE GENOMIC DNA]</scope>
    <source>
        <strain>E24377A / ETEC</strain>
    </source>
</reference>
<proteinExistence type="inferred from homology"/>
<organism>
    <name type="scientific">Escherichia coli O139:H28 (strain E24377A / ETEC)</name>
    <dbReference type="NCBI Taxonomy" id="331111"/>
    <lineage>
        <taxon>Bacteria</taxon>
        <taxon>Pseudomonadati</taxon>
        <taxon>Pseudomonadota</taxon>
        <taxon>Gammaproteobacteria</taxon>
        <taxon>Enterobacterales</taxon>
        <taxon>Enterobacteriaceae</taxon>
        <taxon>Escherichia</taxon>
    </lineage>
</organism>
<comment type="function">
    <text evidence="1">Single strand-specific metallo-endoribonuclease involved in late-stage 70S ribosome quality control and in maturation of the 3' terminus of the 16S rRNA.</text>
</comment>
<comment type="cofactor">
    <cofactor evidence="1">
        <name>Zn(2+)</name>
        <dbReference type="ChEBI" id="CHEBI:29105"/>
    </cofactor>
    <text evidence="1">Binds 1 zinc ion.</text>
</comment>
<comment type="subcellular location">
    <subcellularLocation>
        <location evidence="1">Cytoplasm</location>
    </subcellularLocation>
</comment>
<comment type="similarity">
    <text evidence="1">Belongs to the endoribonuclease YbeY family.</text>
</comment>
<dbReference type="EC" id="3.1.-.-" evidence="1"/>
<dbReference type="EMBL" id="CP000800">
    <property type="protein sequence ID" value="ABV18519.1"/>
    <property type="molecule type" value="Genomic_DNA"/>
</dbReference>
<dbReference type="RefSeq" id="WP_000084469.1">
    <property type="nucleotide sequence ID" value="NC_009801.1"/>
</dbReference>
<dbReference type="SMR" id="A7ZJ51"/>
<dbReference type="GeneID" id="93776823"/>
<dbReference type="KEGG" id="ecw:EcE24377A_0688"/>
<dbReference type="HOGENOM" id="CLU_106710_0_1_6"/>
<dbReference type="Proteomes" id="UP000001122">
    <property type="component" value="Chromosome"/>
</dbReference>
<dbReference type="GO" id="GO:0005737">
    <property type="term" value="C:cytoplasm"/>
    <property type="evidence" value="ECO:0007669"/>
    <property type="project" value="UniProtKB-SubCell"/>
</dbReference>
<dbReference type="GO" id="GO:0004222">
    <property type="term" value="F:metalloendopeptidase activity"/>
    <property type="evidence" value="ECO:0007669"/>
    <property type="project" value="InterPro"/>
</dbReference>
<dbReference type="GO" id="GO:0004521">
    <property type="term" value="F:RNA endonuclease activity"/>
    <property type="evidence" value="ECO:0007669"/>
    <property type="project" value="UniProtKB-UniRule"/>
</dbReference>
<dbReference type="GO" id="GO:0008270">
    <property type="term" value="F:zinc ion binding"/>
    <property type="evidence" value="ECO:0007669"/>
    <property type="project" value="UniProtKB-UniRule"/>
</dbReference>
<dbReference type="GO" id="GO:0006364">
    <property type="term" value="P:rRNA processing"/>
    <property type="evidence" value="ECO:0007669"/>
    <property type="project" value="UniProtKB-UniRule"/>
</dbReference>
<dbReference type="FunFam" id="3.40.390.30:FF:000001">
    <property type="entry name" value="Endoribonuclease YbeY"/>
    <property type="match status" value="1"/>
</dbReference>
<dbReference type="Gene3D" id="3.40.390.30">
    <property type="entry name" value="Metalloproteases ('zincins'), catalytic domain"/>
    <property type="match status" value="1"/>
</dbReference>
<dbReference type="HAMAP" id="MF_00009">
    <property type="entry name" value="Endoribonucl_YbeY"/>
    <property type="match status" value="1"/>
</dbReference>
<dbReference type="InterPro" id="IPR023091">
    <property type="entry name" value="MetalPrtase_cat_dom_sf_prd"/>
</dbReference>
<dbReference type="InterPro" id="IPR002036">
    <property type="entry name" value="YbeY"/>
</dbReference>
<dbReference type="InterPro" id="IPR020549">
    <property type="entry name" value="YbeY_CS"/>
</dbReference>
<dbReference type="NCBIfam" id="TIGR00043">
    <property type="entry name" value="rRNA maturation RNase YbeY"/>
    <property type="match status" value="1"/>
</dbReference>
<dbReference type="PANTHER" id="PTHR46986">
    <property type="entry name" value="ENDORIBONUCLEASE YBEY, CHLOROPLASTIC"/>
    <property type="match status" value="1"/>
</dbReference>
<dbReference type="PANTHER" id="PTHR46986:SF1">
    <property type="entry name" value="ENDORIBONUCLEASE YBEY, CHLOROPLASTIC"/>
    <property type="match status" value="1"/>
</dbReference>
<dbReference type="Pfam" id="PF02130">
    <property type="entry name" value="YbeY"/>
    <property type="match status" value="1"/>
</dbReference>
<dbReference type="SUPFAM" id="SSF55486">
    <property type="entry name" value="Metalloproteases ('zincins'), catalytic domain"/>
    <property type="match status" value="1"/>
</dbReference>
<dbReference type="PROSITE" id="PS01306">
    <property type="entry name" value="UPF0054"/>
    <property type="match status" value="1"/>
</dbReference>
<keyword id="KW-0963">Cytoplasm</keyword>
<keyword id="KW-0255">Endonuclease</keyword>
<keyword id="KW-0378">Hydrolase</keyword>
<keyword id="KW-0479">Metal-binding</keyword>
<keyword id="KW-0540">Nuclease</keyword>
<keyword id="KW-1185">Reference proteome</keyword>
<keyword id="KW-0690">Ribosome biogenesis</keyword>
<keyword id="KW-0698">rRNA processing</keyword>
<keyword id="KW-0862">Zinc</keyword>
<protein>
    <recommendedName>
        <fullName evidence="1">Endoribonuclease YbeY</fullName>
        <ecNumber evidence="1">3.1.-.-</ecNumber>
    </recommendedName>
</protein>
<gene>
    <name evidence="1" type="primary">ybeY</name>
    <name type="ordered locus">EcE24377A_0688</name>
</gene>
<name>YBEY_ECO24</name>